<comment type="function">
    <text evidence="2">Catalytic subunit of the molybdopterin synthase complex, a complex that catalyzes the conversion of precursor Z into molybdopterin. Acts by mediating the incorporation of 2 sulfur atoms from thiocarboxylated Mocs2A into precursor Z to generate a dithiolene group.</text>
</comment>
<comment type="catalytic activity">
    <reaction evidence="2">
        <text>2 [molybdopterin-synthase sulfur-carrier protein]-C-terminal-Gly-aminoethanethioate + cyclic pyranopterin phosphate + H2O = molybdopterin + 2 [molybdopterin-synthase sulfur-carrier protein]-C-terminal Gly-Gly + 2 H(+)</text>
        <dbReference type="Rhea" id="RHEA:26333"/>
        <dbReference type="Rhea" id="RHEA-COMP:12202"/>
        <dbReference type="Rhea" id="RHEA-COMP:19907"/>
        <dbReference type="ChEBI" id="CHEBI:15377"/>
        <dbReference type="ChEBI" id="CHEBI:15378"/>
        <dbReference type="ChEBI" id="CHEBI:58698"/>
        <dbReference type="ChEBI" id="CHEBI:59648"/>
        <dbReference type="ChEBI" id="CHEBI:90778"/>
        <dbReference type="ChEBI" id="CHEBI:232372"/>
        <dbReference type="EC" id="2.8.1.12"/>
    </reaction>
</comment>
<comment type="pathway">
    <text evidence="2">Cofactor biosynthesis; molybdopterin biosynthesis.</text>
</comment>
<comment type="subunit">
    <text evidence="2">Heterotetramer; composed of 2 small (Mocs2A) and 2 large (Mocs2B) subunits.</text>
</comment>
<comment type="subcellular location">
    <subcellularLocation>
        <location evidence="2">Cytoplasm</location>
    </subcellularLocation>
</comment>
<comment type="miscellaneous">
    <text>This protein is produced by a bicistronic gene which also produces the small subunit (Mocs2A).</text>
</comment>
<comment type="similarity">
    <text evidence="2">Belongs to the MoaE family. MOCS2B subfamily.</text>
</comment>
<sequence>MDHIELISSPLDITTLYTLLGDPGCGASSVFVGTTRDSFEGKKVLSLEYEAYEPMAIKEMKTICTDLRAKWPDLKHIVIYHRLGSVPVGEASVVIATSAPHRLSALESVSLAVDQLKTRVPIWKKELYEGDDPAQWKENKESLRPKHSQVTSNRFNFATCKIEKQNENISDKLVQIRVHDDELSKRVECFVRRKRMEINMLNVRDFTQNQSLPHVLNNEEAEVSCARTQGAVIKQEQSNCHLKVRRVNNKSGPQQMHLRPNYAQELNKLMGSSESSCDPSGQVQNDLANNRLRTIESYMGLSANNQSLLSRLKQVENRILLLESTSPEYNHFTNNLKQPDSEEPSPKRLKRKIYCAEELNNLLKSFKDETGS</sequence>
<proteinExistence type="inferred from homology"/>
<evidence type="ECO:0000250" key="1">
    <source>
        <dbReference type="UniProtKB" id="Q9VBX2"/>
    </source>
</evidence>
<evidence type="ECO:0000255" key="2">
    <source>
        <dbReference type="HAMAP-Rule" id="MF_03052"/>
    </source>
</evidence>
<protein>
    <recommendedName>
        <fullName evidence="2">Molybdopterin synthase catalytic subunit</fullName>
        <ecNumber evidence="2">2.8.1.12</ecNumber>
    </recommendedName>
    <alternativeName>
        <fullName evidence="2">Molybdenum cofactor synthesis protein 2 large subunit</fullName>
    </alternativeName>
    <alternativeName>
        <fullName evidence="2">Molybdenum cofactor synthesis protein 2B</fullName>
        <shortName evidence="2">MOCS2B</shortName>
    </alternativeName>
</protein>
<organism>
    <name type="scientific">Drosophila willistoni</name>
    <name type="common">Fruit fly</name>
    <dbReference type="NCBI Taxonomy" id="7260"/>
    <lineage>
        <taxon>Eukaryota</taxon>
        <taxon>Metazoa</taxon>
        <taxon>Ecdysozoa</taxon>
        <taxon>Arthropoda</taxon>
        <taxon>Hexapoda</taxon>
        <taxon>Insecta</taxon>
        <taxon>Pterygota</taxon>
        <taxon>Neoptera</taxon>
        <taxon>Endopterygota</taxon>
        <taxon>Diptera</taxon>
        <taxon>Brachycera</taxon>
        <taxon>Muscomorpha</taxon>
        <taxon>Ephydroidea</taxon>
        <taxon>Drosophilidae</taxon>
        <taxon>Drosophila</taxon>
        <taxon>Sophophora</taxon>
    </lineage>
</organism>
<gene>
    <name evidence="1" type="primary">Mocs2B</name>
    <name evidence="2" type="synonym">Mocs2</name>
    <name type="ORF">GK13883</name>
</gene>
<name>MOC2B_DROWI</name>
<accession>B4NJW0</accession>
<feature type="chain" id="PRO_0000369343" description="Molybdopterin synthase catalytic subunit">
    <location>
        <begin position="1"/>
        <end position="372"/>
    </location>
</feature>
<feature type="binding site" evidence="2">
    <location>
        <begin position="101"/>
        <end position="102"/>
    </location>
    <ligand>
        <name>substrate</name>
    </ligand>
</feature>
<feature type="binding site" evidence="2">
    <location>
        <position position="117"/>
    </location>
    <ligand>
        <name>substrate</name>
    </ligand>
</feature>
<feature type="binding site" evidence="2">
    <location>
        <begin position="124"/>
        <end position="126"/>
    </location>
    <ligand>
        <name>substrate</name>
    </ligand>
</feature>
<dbReference type="EC" id="2.8.1.12" evidence="2"/>
<dbReference type="EMBL" id="CH964272">
    <property type="protein sequence ID" value="EDW83962.1"/>
    <property type="molecule type" value="Genomic_DNA"/>
</dbReference>
<dbReference type="SMR" id="B4NJW0"/>
<dbReference type="STRING" id="7260.B4NJW0"/>
<dbReference type="EnsemblMetazoa" id="FBtr0244534">
    <property type="protein sequence ID" value="FBpp0243026"/>
    <property type="gene ID" value="FBgn0215890"/>
</dbReference>
<dbReference type="EnsemblMetazoa" id="XM_002072940.4">
    <property type="protein sequence ID" value="XP_002072976.1"/>
    <property type="gene ID" value="LOC6651376"/>
</dbReference>
<dbReference type="GeneID" id="6651376"/>
<dbReference type="KEGG" id="dwi:6651376"/>
<dbReference type="CTD" id="43017"/>
<dbReference type="eggNOG" id="KOG3307">
    <property type="taxonomic scope" value="Eukaryota"/>
</dbReference>
<dbReference type="HOGENOM" id="CLU_045449_0_0_1"/>
<dbReference type="OMA" id="KIRSQWN"/>
<dbReference type="OrthoDB" id="5531344at2759"/>
<dbReference type="PhylomeDB" id="B4NJW0"/>
<dbReference type="UniPathway" id="UPA00344"/>
<dbReference type="Proteomes" id="UP000007798">
    <property type="component" value="Unassembled WGS sequence"/>
</dbReference>
<dbReference type="GO" id="GO:0140672">
    <property type="term" value="C:ATAC complex"/>
    <property type="evidence" value="ECO:0007669"/>
    <property type="project" value="EnsemblMetazoa"/>
</dbReference>
<dbReference type="GO" id="GO:0005829">
    <property type="term" value="C:cytosol"/>
    <property type="evidence" value="ECO:0000250"/>
    <property type="project" value="UniProtKB"/>
</dbReference>
<dbReference type="GO" id="GO:1990140">
    <property type="term" value="C:molybdopterin synthase complex"/>
    <property type="evidence" value="ECO:0000250"/>
    <property type="project" value="UniProtKB"/>
</dbReference>
<dbReference type="GO" id="GO:0005700">
    <property type="term" value="C:polytene chromosome"/>
    <property type="evidence" value="ECO:0007669"/>
    <property type="project" value="EnsemblMetazoa"/>
</dbReference>
<dbReference type="GO" id="GO:0030366">
    <property type="term" value="F:molybdopterin synthase activity"/>
    <property type="evidence" value="ECO:0007669"/>
    <property type="project" value="UniProtKB-UniRule"/>
</dbReference>
<dbReference type="GO" id="GO:0006338">
    <property type="term" value="P:chromatin remodeling"/>
    <property type="evidence" value="ECO:0007669"/>
    <property type="project" value="EnsemblMetazoa"/>
</dbReference>
<dbReference type="GO" id="GO:0006777">
    <property type="term" value="P:Mo-molybdopterin cofactor biosynthetic process"/>
    <property type="evidence" value="ECO:0000250"/>
    <property type="project" value="UniProtKB"/>
</dbReference>
<dbReference type="CDD" id="cd00756">
    <property type="entry name" value="MoaE"/>
    <property type="match status" value="1"/>
</dbReference>
<dbReference type="FunFam" id="3.90.1170.40:FF:000002">
    <property type="entry name" value="Molybdopterin synthase catalytic subunit"/>
    <property type="match status" value="1"/>
</dbReference>
<dbReference type="Gene3D" id="3.90.1170.40">
    <property type="entry name" value="Molybdopterin biosynthesis MoaE subunit"/>
    <property type="match status" value="1"/>
</dbReference>
<dbReference type="HAMAP" id="MF_03052">
    <property type="entry name" value="MOC2B"/>
    <property type="match status" value="1"/>
</dbReference>
<dbReference type="InterPro" id="IPR036563">
    <property type="entry name" value="MoaE_sf"/>
</dbReference>
<dbReference type="InterPro" id="IPR028888">
    <property type="entry name" value="MOCS2B_euk"/>
</dbReference>
<dbReference type="InterPro" id="IPR003448">
    <property type="entry name" value="Mopterin_biosynth_MoaE"/>
</dbReference>
<dbReference type="PANTHER" id="PTHR23404">
    <property type="entry name" value="MOLYBDOPTERIN SYNTHASE RELATED"/>
    <property type="match status" value="1"/>
</dbReference>
<dbReference type="Pfam" id="PF02391">
    <property type="entry name" value="MoaE"/>
    <property type="match status" value="1"/>
</dbReference>
<dbReference type="SUPFAM" id="SSF54690">
    <property type="entry name" value="Molybdopterin synthase subunit MoaE"/>
    <property type="match status" value="1"/>
</dbReference>
<keyword id="KW-0963">Cytoplasm</keyword>
<keyword id="KW-0501">Molybdenum cofactor biosynthesis</keyword>
<keyword id="KW-1185">Reference proteome</keyword>
<keyword id="KW-0808">Transferase</keyword>
<reference key="1">
    <citation type="journal article" date="2007" name="Nature">
        <title>Evolution of genes and genomes on the Drosophila phylogeny.</title>
        <authorList>
            <consortium name="Drosophila 12 genomes consortium"/>
        </authorList>
    </citation>
    <scope>NUCLEOTIDE SEQUENCE [LARGE SCALE GENOMIC DNA]</scope>
    <source>
        <strain>Tucson 14030-0811.24</strain>
    </source>
</reference>